<comment type="catalytic activity">
    <reaction>
        <text>5-phospho-beta-D-ribosylamine + glycine + ATP = N(1)-(5-phospho-beta-D-ribosyl)glycinamide + ADP + phosphate + H(+)</text>
        <dbReference type="Rhea" id="RHEA:17453"/>
        <dbReference type="ChEBI" id="CHEBI:15378"/>
        <dbReference type="ChEBI" id="CHEBI:30616"/>
        <dbReference type="ChEBI" id="CHEBI:43474"/>
        <dbReference type="ChEBI" id="CHEBI:57305"/>
        <dbReference type="ChEBI" id="CHEBI:58681"/>
        <dbReference type="ChEBI" id="CHEBI:143788"/>
        <dbReference type="ChEBI" id="CHEBI:456216"/>
        <dbReference type="EC" id="6.3.4.13"/>
    </reaction>
</comment>
<comment type="pathway">
    <text>Purine metabolism; IMP biosynthesis via de novo pathway; N(1)-(5-phospho-D-ribosyl)glycinamide from 5-phospho-alpha-D-ribose 1-diphosphate: step 2/2.</text>
</comment>
<comment type="subcellular location">
    <subcellularLocation>
        <location>Plastid</location>
        <location>Chloroplast</location>
    </subcellularLocation>
</comment>
<comment type="similarity">
    <text evidence="2">Belongs to the GARS family.</text>
</comment>
<name>PUR2_VIGUN</name>
<evidence type="ECO:0000255" key="1">
    <source>
        <dbReference type="PROSITE-ProRule" id="PRU00409"/>
    </source>
</evidence>
<evidence type="ECO:0000305" key="2"/>
<sequence>DPRVRKQYIQEQGAPIVIKADGLAAGKGVTVAMTLEEAYKAVDSMLVQGDFGSAGCRVIVEEFLEGEEASFFALVDGENAIPLESAQDHKRVGDGDTGPNTGGMGAYSPAPVLTKELQSIVMDSIIIPTVKGMSAEGSKFVGVLYAGLMIEKKSGMPKLIEYNVRFGDPECQVLMVRLESDLVQVLLAACRGELNGVSLKWSPGSAMVVVMASKGYPGSYQKGTVIENLEEAEAVAPGIKIFHAGTAFDSEGRFIATGGRVLGVTAKGNDLEEACDRAYLAVENVNWPGGFLPSGYWLESSTSETSMLERE</sequence>
<keyword id="KW-0067">ATP-binding</keyword>
<keyword id="KW-0150">Chloroplast</keyword>
<keyword id="KW-0436">Ligase</keyword>
<keyword id="KW-0547">Nucleotide-binding</keyword>
<keyword id="KW-0934">Plastid</keyword>
<keyword id="KW-0658">Purine biosynthesis</keyword>
<feature type="chain" id="PRO_0000151518" description="Phosphoribosylamine--glycine ligase">
    <location>
        <begin position="1" status="less than"/>
        <end position="311"/>
    </location>
</feature>
<feature type="domain" description="ATP-grasp" evidence="1">
    <location>
        <begin position="1" status="less than"/>
        <end position="191"/>
    </location>
</feature>
<feature type="non-terminal residue">
    <location>
        <position position="1"/>
    </location>
</feature>
<protein>
    <recommendedName>
        <fullName>Phosphoribosylamine--glycine ligase</fullName>
        <ecNumber>6.3.4.13</ecNumber>
    </recommendedName>
    <alternativeName>
        <fullName>Glycinamide ribonucleotide synthetase</fullName>
        <shortName>GARS</shortName>
    </alternativeName>
    <alternativeName>
        <fullName>Phosphoribosylglycinamide synthetase</fullName>
    </alternativeName>
</protein>
<gene>
    <name type="primary">PUR2</name>
</gene>
<dbReference type="EC" id="6.3.4.13"/>
<dbReference type="EMBL" id="U30896">
    <property type="protein sequence ID" value="AAA74447.1"/>
    <property type="molecule type" value="mRNA"/>
</dbReference>
<dbReference type="PIR" id="T11532">
    <property type="entry name" value="T11532"/>
</dbReference>
<dbReference type="SMR" id="P52421"/>
<dbReference type="UniPathway" id="UPA00074">
    <property type="reaction ID" value="UER00125"/>
</dbReference>
<dbReference type="GO" id="GO:0009507">
    <property type="term" value="C:chloroplast"/>
    <property type="evidence" value="ECO:0007669"/>
    <property type="project" value="UniProtKB-SubCell"/>
</dbReference>
<dbReference type="GO" id="GO:0005524">
    <property type="term" value="F:ATP binding"/>
    <property type="evidence" value="ECO:0007669"/>
    <property type="project" value="UniProtKB-KW"/>
</dbReference>
<dbReference type="GO" id="GO:0046872">
    <property type="term" value="F:metal ion binding"/>
    <property type="evidence" value="ECO:0007669"/>
    <property type="project" value="InterPro"/>
</dbReference>
<dbReference type="GO" id="GO:0004637">
    <property type="term" value="F:phosphoribosylamine-glycine ligase activity"/>
    <property type="evidence" value="ECO:0007669"/>
    <property type="project" value="UniProtKB-EC"/>
</dbReference>
<dbReference type="GO" id="GO:0006189">
    <property type="term" value="P:'de novo' IMP biosynthetic process"/>
    <property type="evidence" value="ECO:0007669"/>
    <property type="project" value="UniProtKB-UniPathway"/>
</dbReference>
<dbReference type="GO" id="GO:0009113">
    <property type="term" value="P:purine nucleobase biosynthetic process"/>
    <property type="evidence" value="ECO:0007669"/>
    <property type="project" value="InterPro"/>
</dbReference>
<dbReference type="FunFam" id="3.30.470.20:FF:000031">
    <property type="entry name" value="Phosphoribosylamine--glycine ligase"/>
    <property type="match status" value="1"/>
</dbReference>
<dbReference type="FunFam" id="3.30.1490.20:FF:000006">
    <property type="entry name" value="phosphoribosylamine--glycine ligase, chloroplastic-like"/>
    <property type="match status" value="1"/>
</dbReference>
<dbReference type="Gene3D" id="3.30.1490.20">
    <property type="entry name" value="ATP-grasp fold, A domain"/>
    <property type="match status" value="1"/>
</dbReference>
<dbReference type="Gene3D" id="3.30.470.20">
    <property type="entry name" value="ATP-grasp fold, B domain"/>
    <property type="match status" value="1"/>
</dbReference>
<dbReference type="Gene3D" id="3.90.600.10">
    <property type="entry name" value="Phosphoribosylglycinamide synthetase, C-terminal domain"/>
    <property type="match status" value="1"/>
</dbReference>
<dbReference type="InterPro" id="IPR011761">
    <property type="entry name" value="ATP-grasp"/>
</dbReference>
<dbReference type="InterPro" id="IPR013815">
    <property type="entry name" value="ATP_grasp_subdomain_1"/>
</dbReference>
<dbReference type="InterPro" id="IPR020561">
    <property type="entry name" value="PRibGlycinamid_synth_ATP-grasp"/>
</dbReference>
<dbReference type="InterPro" id="IPR000115">
    <property type="entry name" value="PRibGlycinamide_synth"/>
</dbReference>
<dbReference type="InterPro" id="IPR020560">
    <property type="entry name" value="PRibGlycinamide_synth_C-dom"/>
</dbReference>
<dbReference type="InterPro" id="IPR037123">
    <property type="entry name" value="PRibGlycinamide_synth_C_sf"/>
</dbReference>
<dbReference type="InterPro" id="IPR020559">
    <property type="entry name" value="PRibGlycinamide_synth_CS"/>
</dbReference>
<dbReference type="InterPro" id="IPR011054">
    <property type="entry name" value="Rudment_hybrid_motif"/>
</dbReference>
<dbReference type="NCBIfam" id="TIGR00877">
    <property type="entry name" value="purD"/>
    <property type="match status" value="1"/>
</dbReference>
<dbReference type="PANTHER" id="PTHR43472">
    <property type="entry name" value="PHOSPHORIBOSYLAMINE--GLYCINE LIGASE"/>
    <property type="match status" value="1"/>
</dbReference>
<dbReference type="PANTHER" id="PTHR43472:SF1">
    <property type="entry name" value="PHOSPHORIBOSYLAMINE--GLYCINE LIGASE, CHLOROPLASTIC"/>
    <property type="match status" value="1"/>
</dbReference>
<dbReference type="Pfam" id="PF01071">
    <property type="entry name" value="GARS_A"/>
    <property type="match status" value="1"/>
</dbReference>
<dbReference type="Pfam" id="PF02843">
    <property type="entry name" value="GARS_C"/>
    <property type="match status" value="1"/>
</dbReference>
<dbReference type="SMART" id="SM01209">
    <property type="entry name" value="GARS_A"/>
    <property type="match status" value="1"/>
</dbReference>
<dbReference type="SMART" id="SM01210">
    <property type="entry name" value="GARS_C"/>
    <property type="match status" value="1"/>
</dbReference>
<dbReference type="SUPFAM" id="SSF56059">
    <property type="entry name" value="Glutathione synthetase ATP-binding domain-like"/>
    <property type="match status" value="1"/>
</dbReference>
<dbReference type="SUPFAM" id="SSF51246">
    <property type="entry name" value="Rudiment single hybrid motif"/>
    <property type="match status" value="1"/>
</dbReference>
<dbReference type="PROSITE" id="PS50975">
    <property type="entry name" value="ATP_GRASP"/>
    <property type="match status" value="1"/>
</dbReference>
<dbReference type="PROSITE" id="PS00184">
    <property type="entry name" value="GARS"/>
    <property type="match status" value="1"/>
</dbReference>
<proteinExistence type="evidence at transcript level"/>
<accession>P52421</accession>
<organism>
    <name type="scientific">Vigna unguiculata</name>
    <name type="common">Cowpea</name>
    <dbReference type="NCBI Taxonomy" id="3917"/>
    <lineage>
        <taxon>Eukaryota</taxon>
        <taxon>Viridiplantae</taxon>
        <taxon>Streptophyta</taxon>
        <taxon>Embryophyta</taxon>
        <taxon>Tracheophyta</taxon>
        <taxon>Spermatophyta</taxon>
        <taxon>Magnoliopsida</taxon>
        <taxon>eudicotyledons</taxon>
        <taxon>Gunneridae</taxon>
        <taxon>Pentapetalae</taxon>
        <taxon>rosids</taxon>
        <taxon>fabids</taxon>
        <taxon>Fabales</taxon>
        <taxon>Fabaceae</taxon>
        <taxon>Papilionoideae</taxon>
        <taxon>50 kb inversion clade</taxon>
        <taxon>NPAAA clade</taxon>
        <taxon>indigoferoid/millettioid clade</taxon>
        <taxon>Phaseoleae</taxon>
        <taxon>Vigna</taxon>
    </lineage>
</organism>
<reference key="1">
    <citation type="submission" date="1995-07" db="EMBL/GenBank/DDBJ databases">
        <authorList>
            <person name="Smith P.M.C."/>
            <person name="Mann A.J."/>
            <person name="Hall D.J."/>
            <person name="Atkins C.A."/>
        </authorList>
    </citation>
    <scope>NUCLEOTIDE SEQUENCE [MRNA]</scope>
    <source>
        <strain>cv. Vita 3</strain>
        <tissue>Root nodule</tissue>
    </source>
</reference>